<proteinExistence type="inferred from homology"/>
<accession>Q939R0</accession>
<accession>C9RS78</accession>
<accession>D9S4K4</accession>
<sequence length="563" mass="62460">MAKATAKNSAKQPKYIFITGGVVSSLGKGITSASLALLLKSRGYKVFMQKLDPYLNVDPGTMSPYQHGEVFVTDDGYETDLDLGHYERFAGVQCSKASSYTSGRIYSSVLSKERAGHYLGGTVQVIPHITNEIKDAFRSAAESGADIILCEIGGVAGDIESLPFLEAARQFRFEVGVENTCFIHLTLVPYLKAAGELKTKPSQHSVAELRNIGIFPDILVCRTEMHIPQEHLDKLALFCNVKPECVIEEKDVKDSVYAVPRELSKQELDLRVLEQLHLSVHPIVHSEWDSLVKKATQPKYECTIALVGKYIAIRDAYKSVHEALQHAGMANNAKVNVECIEAEELEKNPKLIKKADGILIPGGFGSRGVNGKCAAIRYARENKVPLLGICLGMQCCVIEFARDVLGWKDANSTEFDENTTHPVIDLMDEQKNVTEKGGTMRLGAYPCKLAKDSNAAKLYKSEKISERHRHRYEFNYNSEFRKELEKAGLKIAGTSPDGKLVEMVELKNHPYFEACQFHPEFKSRPTDPHPLFTGLVKAALEQKKANGKKPTAPSEKTKKTKTK</sequence>
<reference key="1">
    <citation type="submission" date="2009-10" db="EMBL/GenBank/DDBJ databases">
        <title>Complete sequence of Fibrobacter succinogenes subsp. succinogenes S85.</title>
        <authorList>
            <consortium name="US DOE Joint Genome Institute"/>
            <person name="Lucas S."/>
            <person name="Copeland A."/>
            <person name="Lapidus A."/>
            <person name="Glavina del Rio T."/>
            <person name="Tice H."/>
            <person name="Bruce D."/>
            <person name="Goodwin L."/>
            <person name="Pitluck S."/>
            <person name="Chertkov O."/>
            <person name="Detter J.C."/>
            <person name="Han C."/>
            <person name="Tapia R."/>
            <person name="Larimer F."/>
            <person name="Land M."/>
            <person name="Hauser L."/>
            <person name="Kyrpides N."/>
            <person name="Mikhailova N."/>
            <person name="Weimer P.J."/>
            <person name="Stevenson D.M."/>
            <person name="Boyum J."/>
            <person name="Brumm P.I."/>
            <person name="Mead D."/>
        </authorList>
    </citation>
    <scope>NUCLEOTIDE SEQUENCE [LARGE SCALE GENOMIC DNA]</scope>
    <source>
        <strain>ATCC 19169 / S85</strain>
    </source>
</reference>
<reference key="2">
    <citation type="submission" date="2010-08" db="EMBL/GenBank/DDBJ databases">
        <title>Complete sequence of Fibrobacter succinogenes subsp. succinogenes S85.</title>
        <authorList>
            <person name="Durkin A.S."/>
            <person name="Nelson K.E."/>
            <person name="Morrison M."/>
            <person name="Forsberg C.W."/>
            <person name="Wilson D.B."/>
            <person name="Russell J.B."/>
            <person name="Cann I.K.O."/>
            <person name="Mackie R.I."/>
            <person name="White B.A."/>
        </authorList>
    </citation>
    <scope>NUCLEOTIDE SEQUENCE [LARGE SCALE GENOMIC DNA]</scope>
    <source>
        <strain>ATCC 19169 / S85</strain>
    </source>
</reference>
<reference key="3">
    <citation type="journal article" date="2001" name="Microbiology">
        <title>The use of signature sequences in different proteins to determine the relative branching order of bacterial divisions: evidence that Fibrobacter diverged at a similar time to Chlamydia and the Cytophaga-Flavobacterium-Bacteroides division.</title>
        <authorList>
            <person name="Griffiths E."/>
            <person name="Gupta R.S."/>
        </authorList>
    </citation>
    <scope>NUCLEOTIDE SEQUENCE [GENOMIC DNA] OF 388-520</scope>
</reference>
<dbReference type="EC" id="6.3.4.2" evidence="1"/>
<dbReference type="EMBL" id="CP001792">
    <property type="protein sequence ID" value="ACX75414.1"/>
    <property type="molecule type" value="Genomic_DNA"/>
</dbReference>
<dbReference type="EMBL" id="CP002158">
    <property type="protein sequence ID" value="ADL27373.1"/>
    <property type="molecule type" value="Genomic_DNA"/>
</dbReference>
<dbReference type="EMBL" id="AY017383">
    <property type="protein sequence ID" value="AAK13023.1"/>
    <property type="molecule type" value="Genomic_DNA"/>
</dbReference>
<dbReference type="RefSeq" id="WP_014546486.1">
    <property type="nucleotide sequence ID" value="NC_013410.1"/>
</dbReference>
<dbReference type="SMR" id="Q939R0"/>
<dbReference type="STRING" id="59374.FSU_2325"/>
<dbReference type="MEROPS" id="C26.964"/>
<dbReference type="KEGG" id="fsc:FSU_2325"/>
<dbReference type="KEGG" id="fsu:Fisuc_1822"/>
<dbReference type="PATRIC" id="fig|59374.8.peg.2235"/>
<dbReference type="eggNOG" id="COG0504">
    <property type="taxonomic scope" value="Bacteria"/>
</dbReference>
<dbReference type="HOGENOM" id="CLU_011675_5_0_0"/>
<dbReference type="OrthoDB" id="9801107at2"/>
<dbReference type="UniPathway" id="UPA00159">
    <property type="reaction ID" value="UER00277"/>
</dbReference>
<dbReference type="Proteomes" id="UP000000517">
    <property type="component" value="Chromosome"/>
</dbReference>
<dbReference type="GO" id="GO:0005829">
    <property type="term" value="C:cytosol"/>
    <property type="evidence" value="ECO:0007669"/>
    <property type="project" value="TreeGrafter"/>
</dbReference>
<dbReference type="GO" id="GO:0005524">
    <property type="term" value="F:ATP binding"/>
    <property type="evidence" value="ECO:0007669"/>
    <property type="project" value="UniProtKB-KW"/>
</dbReference>
<dbReference type="GO" id="GO:0003883">
    <property type="term" value="F:CTP synthase activity"/>
    <property type="evidence" value="ECO:0007669"/>
    <property type="project" value="UniProtKB-UniRule"/>
</dbReference>
<dbReference type="GO" id="GO:0004359">
    <property type="term" value="F:glutaminase activity"/>
    <property type="evidence" value="ECO:0007669"/>
    <property type="project" value="RHEA"/>
</dbReference>
<dbReference type="GO" id="GO:0042802">
    <property type="term" value="F:identical protein binding"/>
    <property type="evidence" value="ECO:0007669"/>
    <property type="project" value="TreeGrafter"/>
</dbReference>
<dbReference type="GO" id="GO:0046872">
    <property type="term" value="F:metal ion binding"/>
    <property type="evidence" value="ECO:0007669"/>
    <property type="project" value="UniProtKB-KW"/>
</dbReference>
<dbReference type="GO" id="GO:0044210">
    <property type="term" value="P:'de novo' CTP biosynthetic process"/>
    <property type="evidence" value="ECO:0007669"/>
    <property type="project" value="UniProtKB-UniRule"/>
</dbReference>
<dbReference type="GO" id="GO:0019856">
    <property type="term" value="P:pyrimidine nucleobase biosynthetic process"/>
    <property type="evidence" value="ECO:0007669"/>
    <property type="project" value="TreeGrafter"/>
</dbReference>
<dbReference type="CDD" id="cd03113">
    <property type="entry name" value="CTPS_N"/>
    <property type="match status" value="1"/>
</dbReference>
<dbReference type="CDD" id="cd01746">
    <property type="entry name" value="GATase1_CTP_Synthase"/>
    <property type="match status" value="1"/>
</dbReference>
<dbReference type="FunFam" id="3.40.50.300:FF:000009">
    <property type="entry name" value="CTP synthase"/>
    <property type="match status" value="1"/>
</dbReference>
<dbReference type="FunFam" id="3.40.50.880:FF:000002">
    <property type="entry name" value="CTP synthase"/>
    <property type="match status" value="1"/>
</dbReference>
<dbReference type="Gene3D" id="3.40.50.880">
    <property type="match status" value="1"/>
</dbReference>
<dbReference type="Gene3D" id="3.40.50.300">
    <property type="entry name" value="P-loop containing nucleotide triphosphate hydrolases"/>
    <property type="match status" value="1"/>
</dbReference>
<dbReference type="HAMAP" id="MF_01227">
    <property type="entry name" value="PyrG"/>
    <property type="match status" value="1"/>
</dbReference>
<dbReference type="InterPro" id="IPR029062">
    <property type="entry name" value="Class_I_gatase-like"/>
</dbReference>
<dbReference type="InterPro" id="IPR004468">
    <property type="entry name" value="CTP_synthase"/>
</dbReference>
<dbReference type="InterPro" id="IPR017456">
    <property type="entry name" value="CTP_synthase_N"/>
</dbReference>
<dbReference type="InterPro" id="IPR017926">
    <property type="entry name" value="GATASE"/>
</dbReference>
<dbReference type="InterPro" id="IPR033828">
    <property type="entry name" value="GATase1_CTP_Synthase"/>
</dbReference>
<dbReference type="InterPro" id="IPR027417">
    <property type="entry name" value="P-loop_NTPase"/>
</dbReference>
<dbReference type="NCBIfam" id="NF003792">
    <property type="entry name" value="PRK05380.1"/>
    <property type="match status" value="1"/>
</dbReference>
<dbReference type="NCBIfam" id="TIGR00337">
    <property type="entry name" value="PyrG"/>
    <property type="match status" value="1"/>
</dbReference>
<dbReference type="PANTHER" id="PTHR11550">
    <property type="entry name" value="CTP SYNTHASE"/>
    <property type="match status" value="1"/>
</dbReference>
<dbReference type="PANTHER" id="PTHR11550:SF0">
    <property type="entry name" value="CTP SYNTHASE-RELATED"/>
    <property type="match status" value="1"/>
</dbReference>
<dbReference type="Pfam" id="PF06418">
    <property type="entry name" value="CTP_synth_N"/>
    <property type="match status" value="1"/>
</dbReference>
<dbReference type="Pfam" id="PF00117">
    <property type="entry name" value="GATase"/>
    <property type="match status" value="1"/>
</dbReference>
<dbReference type="SUPFAM" id="SSF52317">
    <property type="entry name" value="Class I glutamine amidotransferase-like"/>
    <property type="match status" value="1"/>
</dbReference>
<dbReference type="SUPFAM" id="SSF52540">
    <property type="entry name" value="P-loop containing nucleoside triphosphate hydrolases"/>
    <property type="match status" value="1"/>
</dbReference>
<dbReference type="PROSITE" id="PS51273">
    <property type="entry name" value="GATASE_TYPE_1"/>
    <property type="match status" value="1"/>
</dbReference>
<gene>
    <name evidence="1" type="primary">pyrG</name>
    <name type="ordered locus">Fisuc_1822</name>
    <name type="ordered locus">FSU_2325</name>
</gene>
<protein>
    <recommendedName>
        <fullName evidence="1">CTP synthase</fullName>
        <ecNumber evidence="1">6.3.4.2</ecNumber>
    </recommendedName>
    <alternativeName>
        <fullName evidence="1">Cytidine 5'-triphosphate synthase</fullName>
    </alternativeName>
    <alternativeName>
        <fullName evidence="1">Cytidine triphosphate synthetase</fullName>
        <shortName evidence="1">CTP synthetase</shortName>
        <shortName evidence="1">CTPS</shortName>
    </alternativeName>
    <alternativeName>
        <fullName evidence="1">UTP--ammonia ligase</fullName>
    </alternativeName>
</protein>
<keyword id="KW-0067">ATP-binding</keyword>
<keyword id="KW-0315">Glutamine amidotransferase</keyword>
<keyword id="KW-0436">Ligase</keyword>
<keyword id="KW-0460">Magnesium</keyword>
<keyword id="KW-0479">Metal-binding</keyword>
<keyword id="KW-0547">Nucleotide-binding</keyword>
<keyword id="KW-0665">Pyrimidine biosynthesis</keyword>
<organism>
    <name type="scientific">Fibrobacter succinogenes (strain ATCC 19169 / S85)</name>
    <dbReference type="NCBI Taxonomy" id="59374"/>
    <lineage>
        <taxon>Bacteria</taxon>
        <taxon>Pseudomonadati</taxon>
        <taxon>Fibrobacterota</taxon>
        <taxon>Fibrobacteria</taxon>
        <taxon>Fibrobacterales</taxon>
        <taxon>Fibrobacteraceae</taxon>
        <taxon>Fibrobacter</taxon>
    </lineage>
</organism>
<name>PYRG_FIBSS</name>
<comment type="function">
    <text evidence="1">Catalyzes the ATP-dependent amination of UTP to CTP with either L-glutamine or ammonia as the source of nitrogen. Regulates intracellular CTP levels through interactions with the four ribonucleotide triphosphates.</text>
</comment>
<comment type="catalytic activity">
    <reaction evidence="1">
        <text>UTP + L-glutamine + ATP + H2O = CTP + L-glutamate + ADP + phosphate + 2 H(+)</text>
        <dbReference type="Rhea" id="RHEA:26426"/>
        <dbReference type="ChEBI" id="CHEBI:15377"/>
        <dbReference type="ChEBI" id="CHEBI:15378"/>
        <dbReference type="ChEBI" id="CHEBI:29985"/>
        <dbReference type="ChEBI" id="CHEBI:30616"/>
        <dbReference type="ChEBI" id="CHEBI:37563"/>
        <dbReference type="ChEBI" id="CHEBI:43474"/>
        <dbReference type="ChEBI" id="CHEBI:46398"/>
        <dbReference type="ChEBI" id="CHEBI:58359"/>
        <dbReference type="ChEBI" id="CHEBI:456216"/>
        <dbReference type="EC" id="6.3.4.2"/>
    </reaction>
</comment>
<comment type="catalytic activity">
    <reaction evidence="1">
        <text>L-glutamine + H2O = L-glutamate + NH4(+)</text>
        <dbReference type="Rhea" id="RHEA:15889"/>
        <dbReference type="ChEBI" id="CHEBI:15377"/>
        <dbReference type="ChEBI" id="CHEBI:28938"/>
        <dbReference type="ChEBI" id="CHEBI:29985"/>
        <dbReference type="ChEBI" id="CHEBI:58359"/>
    </reaction>
</comment>
<comment type="catalytic activity">
    <reaction evidence="1">
        <text>UTP + NH4(+) + ATP = CTP + ADP + phosphate + 2 H(+)</text>
        <dbReference type="Rhea" id="RHEA:16597"/>
        <dbReference type="ChEBI" id="CHEBI:15378"/>
        <dbReference type="ChEBI" id="CHEBI:28938"/>
        <dbReference type="ChEBI" id="CHEBI:30616"/>
        <dbReference type="ChEBI" id="CHEBI:37563"/>
        <dbReference type="ChEBI" id="CHEBI:43474"/>
        <dbReference type="ChEBI" id="CHEBI:46398"/>
        <dbReference type="ChEBI" id="CHEBI:456216"/>
    </reaction>
</comment>
<comment type="activity regulation">
    <text evidence="1">Allosterically activated by GTP, when glutamine is the substrate; GTP has no effect on the reaction when ammonia is the substrate. The allosteric effector GTP functions by stabilizing the protein conformation that binds the tetrahedral intermediate(s) formed during glutamine hydrolysis. Inhibited by the product CTP, via allosteric rather than competitive inhibition.</text>
</comment>
<comment type="pathway">
    <text evidence="1">Pyrimidine metabolism; CTP biosynthesis via de novo pathway; CTP from UDP: step 2/2.</text>
</comment>
<comment type="subunit">
    <text evidence="1">Homotetramer.</text>
</comment>
<comment type="miscellaneous">
    <text evidence="1">CTPSs have evolved a hybrid strategy for distinguishing between UTP and CTP. The overlapping regions of the product feedback inhibitory and substrate sites recognize a common feature in both compounds, the triphosphate moiety. To differentiate isosteric substrate and product pyrimidine rings, an additional pocket far from the expected kinase/ligase catalytic site, specifically recognizes the cytosine and ribose portions of the product inhibitor.</text>
</comment>
<comment type="similarity">
    <text evidence="1">Belongs to the CTP synthase family.</text>
</comment>
<feature type="chain" id="PRO_0000138186" description="CTP synthase">
    <location>
        <begin position="1"/>
        <end position="563"/>
    </location>
</feature>
<feature type="domain" description="Glutamine amidotransferase type-1" evidence="1">
    <location>
        <begin position="303"/>
        <end position="545"/>
    </location>
</feature>
<feature type="region of interest" description="Amidoligase domain" evidence="1">
    <location>
        <begin position="1"/>
        <end position="278"/>
    </location>
</feature>
<feature type="region of interest" description="Disordered" evidence="2">
    <location>
        <begin position="542"/>
        <end position="563"/>
    </location>
</feature>
<feature type="active site" description="Nucleophile; for glutamine hydrolysis" evidence="1">
    <location>
        <position position="390"/>
    </location>
</feature>
<feature type="active site" evidence="1">
    <location>
        <position position="518"/>
    </location>
</feature>
<feature type="active site" evidence="1">
    <location>
        <position position="520"/>
    </location>
</feature>
<feature type="binding site" evidence="1">
    <location>
        <position position="24"/>
    </location>
    <ligand>
        <name>CTP</name>
        <dbReference type="ChEBI" id="CHEBI:37563"/>
        <note>allosteric inhibitor</note>
    </ligand>
</feature>
<feature type="binding site" evidence="1">
    <location>
        <position position="24"/>
    </location>
    <ligand>
        <name>UTP</name>
        <dbReference type="ChEBI" id="CHEBI:46398"/>
    </ligand>
</feature>
<feature type="binding site" evidence="1">
    <location>
        <begin position="25"/>
        <end position="30"/>
    </location>
    <ligand>
        <name>ATP</name>
        <dbReference type="ChEBI" id="CHEBI:30616"/>
    </ligand>
</feature>
<feature type="binding site" evidence="1">
    <location>
        <position position="65"/>
    </location>
    <ligand>
        <name>L-glutamine</name>
        <dbReference type="ChEBI" id="CHEBI:58359"/>
    </ligand>
</feature>
<feature type="binding site" evidence="1">
    <location>
        <position position="82"/>
    </location>
    <ligand>
        <name>ATP</name>
        <dbReference type="ChEBI" id="CHEBI:30616"/>
    </ligand>
</feature>
<feature type="binding site" evidence="1">
    <location>
        <position position="82"/>
    </location>
    <ligand>
        <name>Mg(2+)</name>
        <dbReference type="ChEBI" id="CHEBI:18420"/>
    </ligand>
</feature>
<feature type="binding site" evidence="1">
    <location>
        <position position="151"/>
    </location>
    <ligand>
        <name>Mg(2+)</name>
        <dbReference type="ChEBI" id="CHEBI:18420"/>
    </ligand>
</feature>
<feature type="binding site" evidence="1">
    <location>
        <begin position="158"/>
        <end position="160"/>
    </location>
    <ligand>
        <name>CTP</name>
        <dbReference type="ChEBI" id="CHEBI:37563"/>
        <note>allosteric inhibitor</note>
    </ligand>
</feature>
<feature type="binding site" evidence="1">
    <location>
        <begin position="198"/>
        <end position="203"/>
    </location>
    <ligand>
        <name>CTP</name>
        <dbReference type="ChEBI" id="CHEBI:37563"/>
        <note>allosteric inhibitor</note>
    </ligand>
</feature>
<feature type="binding site" evidence="1">
    <location>
        <begin position="198"/>
        <end position="203"/>
    </location>
    <ligand>
        <name>UTP</name>
        <dbReference type="ChEBI" id="CHEBI:46398"/>
    </ligand>
</feature>
<feature type="binding site" evidence="1">
    <location>
        <position position="234"/>
    </location>
    <ligand>
        <name>CTP</name>
        <dbReference type="ChEBI" id="CHEBI:37563"/>
        <note>allosteric inhibitor</note>
    </ligand>
</feature>
<feature type="binding site" evidence="1">
    <location>
        <position position="234"/>
    </location>
    <ligand>
        <name>UTP</name>
        <dbReference type="ChEBI" id="CHEBI:46398"/>
    </ligand>
</feature>
<feature type="binding site" evidence="1">
    <location>
        <begin position="250"/>
        <end position="252"/>
    </location>
    <ligand>
        <name>ATP</name>
        <dbReference type="ChEBI" id="CHEBI:30616"/>
    </ligand>
</feature>
<feature type="binding site" evidence="1">
    <location>
        <position position="363"/>
    </location>
    <ligand>
        <name>L-glutamine</name>
        <dbReference type="ChEBI" id="CHEBI:58359"/>
    </ligand>
</feature>
<feature type="binding site" evidence="1">
    <location>
        <begin position="391"/>
        <end position="394"/>
    </location>
    <ligand>
        <name>L-glutamine</name>
        <dbReference type="ChEBI" id="CHEBI:58359"/>
    </ligand>
</feature>
<feature type="binding site" evidence="1">
    <location>
        <position position="414"/>
    </location>
    <ligand>
        <name>L-glutamine</name>
        <dbReference type="ChEBI" id="CHEBI:58359"/>
    </ligand>
</feature>
<feature type="binding site" evidence="1">
    <location>
        <position position="471"/>
    </location>
    <ligand>
        <name>L-glutamine</name>
        <dbReference type="ChEBI" id="CHEBI:58359"/>
    </ligand>
</feature>
<feature type="sequence conflict" description="In Ref. 3; AAK13023." evidence="3" ref="3">
    <original>CCV</original>
    <variation>MLA</variation>
    <location>
        <begin position="395"/>
        <end position="397"/>
    </location>
</feature>
<feature type="sequence conflict" description="In Ref. 3; AAK13023." evidence="3" ref="3">
    <original>D</original>
    <variation>N</variation>
    <location>
        <position position="403"/>
    </location>
</feature>
<feature type="sequence conflict" description="In Ref. 3; AAK13023." evidence="3" ref="3">
    <original>WKD</original>
    <variation>LKV</variation>
    <location>
        <begin position="407"/>
        <end position="409"/>
    </location>
</feature>
<feature type="sequence conflict" description="In Ref. 3; AAK13023." evidence="3" ref="3">
    <original>HPVIDLMD</original>
    <variation>PRFIRDLE</variation>
    <location>
        <begin position="421"/>
        <end position="428"/>
    </location>
</feature>
<feature type="sequence conflict" description="In Ref. 3; AAK13023." evidence="3" ref="3">
    <original>NVTE</original>
    <variation>DGHD</variation>
    <location>
        <begin position="432"/>
        <end position="435"/>
    </location>
</feature>
<feature type="sequence conflict" description="In Ref. 3; AAK13023." evidence="3" ref="3">
    <original>A</original>
    <variation>L</variation>
    <location>
        <position position="444"/>
    </location>
</feature>
<feature type="sequence conflict" description="In Ref. 3; AAK13023." evidence="3" ref="3">
    <original>KL</original>
    <variation>NV</variation>
    <location>
        <begin position="457"/>
        <end position="458"/>
    </location>
</feature>
<feature type="sequence conflict" description="In Ref. 3; AAK13023." evidence="3" ref="3">
    <original>S</original>
    <variation>R</variation>
    <location>
        <position position="461"/>
    </location>
</feature>
<feature type="sequence conflict" description="In Ref. 3; AAK13023." evidence="3" ref="3">
    <original>S</original>
    <variation>T</variation>
    <location>
        <position position="465"/>
    </location>
</feature>
<evidence type="ECO:0000255" key="1">
    <source>
        <dbReference type="HAMAP-Rule" id="MF_01227"/>
    </source>
</evidence>
<evidence type="ECO:0000256" key="2">
    <source>
        <dbReference type="SAM" id="MobiDB-lite"/>
    </source>
</evidence>
<evidence type="ECO:0000305" key="3"/>